<comment type="function">
    <text evidence="1">Binds to conventional NLS motifs and mediates nuclear protein import across the nuclear envelope.</text>
</comment>
<comment type="subunit">
    <text evidence="1">Forms a complex with importin subunit beta-1.</text>
</comment>
<comment type="subcellular location">
    <subcellularLocation>
        <location evidence="1">Nucleus envelope</location>
    </subcellularLocation>
</comment>
<comment type="similarity">
    <text evidence="4">Belongs to the importin alpha family.</text>
</comment>
<evidence type="ECO:0000250" key="1">
    <source>
        <dbReference type="UniProtKB" id="Q96321"/>
    </source>
</evidence>
<evidence type="ECO:0000255" key="2"/>
<evidence type="ECO:0000303" key="3">
    <source>
    </source>
</evidence>
<evidence type="ECO:0000305" key="4"/>
<evidence type="ECO:0000312" key="5">
    <source>
        <dbReference type="Araport" id="AT5G52000"/>
    </source>
</evidence>
<evidence type="ECO:0000312" key="6">
    <source>
        <dbReference type="EMBL" id="BAB11048.1"/>
    </source>
</evidence>
<feature type="chain" id="PRO_0000431574" description="Importin subunit alpha-8">
    <location>
        <begin position="1"/>
        <end position="441"/>
    </location>
</feature>
<feature type="repeat" description="ARM 1" evidence="2">
    <location>
        <begin position="39"/>
        <end position="79"/>
    </location>
</feature>
<feature type="repeat" description="ARM 2" evidence="2">
    <location>
        <begin position="80"/>
        <end position="118"/>
    </location>
</feature>
<feature type="repeat" description="ARM 3" evidence="2">
    <location>
        <begin position="121"/>
        <end position="158"/>
    </location>
</feature>
<feature type="repeat" description="ARM 4" evidence="2">
    <location>
        <begin position="160"/>
        <end position="199"/>
    </location>
</feature>
<feature type="repeat" description="ARM 5" evidence="2">
    <location>
        <begin position="202"/>
        <end position="241"/>
    </location>
</feature>
<feature type="repeat" description="ARM 6" evidence="2">
    <location>
        <begin position="244"/>
        <end position="284"/>
    </location>
</feature>
<feature type="repeat" description="ARM 7" evidence="2">
    <location>
        <begin position="287"/>
        <end position="326"/>
    </location>
</feature>
<feature type="repeat" description="ARM 8" evidence="2">
    <location>
        <begin position="330"/>
        <end position="370"/>
    </location>
</feature>
<dbReference type="EMBL" id="AB015478">
    <property type="protein sequence ID" value="BAB11048.1"/>
    <property type="molecule type" value="Genomic_DNA"/>
</dbReference>
<dbReference type="EMBL" id="CP002688">
    <property type="protein sequence ID" value="AED96157.1"/>
    <property type="molecule type" value="Genomic_DNA"/>
</dbReference>
<dbReference type="SMR" id="Q9FJ92"/>
<dbReference type="FunCoup" id="Q9FJ92">
    <property type="interactions" value="2223"/>
</dbReference>
<dbReference type="STRING" id="3702.Q9FJ92"/>
<dbReference type="PaxDb" id="3702-AT5G52000.1"/>
<dbReference type="ProteomicsDB" id="248541"/>
<dbReference type="EnsemblPlants" id="AT5G52000.1">
    <property type="protein sequence ID" value="AT5G52000.1"/>
    <property type="gene ID" value="AT5G52000"/>
</dbReference>
<dbReference type="Gramene" id="AT5G52000.1">
    <property type="protein sequence ID" value="AT5G52000.1"/>
    <property type="gene ID" value="AT5G52000"/>
</dbReference>
<dbReference type="KEGG" id="ath:AT5G52000"/>
<dbReference type="Araport" id="AT5G52000"/>
<dbReference type="TAIR" id="AT5G52000">
    <property type="gene designation" value="IMPA-8"/>
</dbReference>
<dbReference type="eggNOG" id="KOG0166">
    <property type="taxonomic scope" value="Eukaryota"/>
</dbReference>
<dbReference type="HOGENOM" id="CLU_018084_6_0_1"/>
<dbReference type="InParanoid" id="Q9FJ92"/>
<dbReference type="PhylomeDB" id="Q9FJ92"/>
<dbReference type="PRO" id="PR:Q9FJ92"/>
<dbReference type="Proteomes" id="UP000006548">
    <property type="component" value="Chromosome 5"/>
</dbReference>
<dbReference type="ExpressionAtlas" id="Q9FJ92">
    <property type="expression patterns" value="baseline and differential"/>
</dbReference>
<dbReference type="GO" id="GO:0005737">
    <property type="term" value="C:cytoplasm"/>
    <property type="evidence" value="ECO:0007669"/>
    <property type="project" value="InterPro"/>
</dbReference>
<dbReference type="GO" id="GO:0005635">
    <property type="term" value="C:nuclear envelope"/>
    <property type="evidence" value="ECO:0007669"/>
    <property type="project" value="UniProtKB-SubCell"/>
</dbReference>
<dbReference type="GO" id="GO:0061608">
    <property type="term" value="F:nuclear import signal receptor activity"/>
    <property type="evidence" value="ECO:0007669"/>
    <property type="project" value="InterPro"/>
</dbReference>
<dbReference type="GO" id="GO:0048235">
    <property type="term" value="P:pollen sperm cell differentiation"/>
    <property type="evidence" value="ECO:0000270"/>
    <property type="project" value="TAIR"/>
</dbReference>
<dbReference type="GO" id="GO:0006606">
    <property type="term" value="P:protein import into nucleus"/>
    <property type="evidence" value="ECO:0007669"/>
    <property type="project" value="InterPro"/>
</dbReference>
<dbReference type="Gene3D" id="1.25.10.10">
    <property type="entry name" value="Leucine-rich Repeat Variant"/>
    <property type="match status" value="1"/>
</dbReference>
<dbReference type="InterPro" id="IPR011989">
    <property type="entry name" value="ARM-like"/>
</dbReference>
<dbReference type="InterPro" id="IPR016024">
    <property type="entry name" value="ARM-type_fold"/>
</dbReference>
<dbReference type="InterPro" id="IPR032413">
    <property type="entry name" value="Arm_3"/>
</dbReference>
<dbReference type="InterPro" id="IPR000225">
    <property type="entry name" value="Armadillo"/>
</dbReference>
<dbReference type="InterPro" id="IPR021133">
    <property type="entry name" value="HEAT_type_2"/>
</dbReference>
<dbReference type="InterPro" id="IPR024931">
    <property type="entry name" value="Importin_alpha"/>
</dbReference>
<dbReference type="PANTHER" id="PTHR23316">
    <property type="entry name" value="IMPORTIN ALPHA"/>
    <property type="match status" value="1"/>
</dbReference>
<dbReference type="Pfam" id="PF00514">
    <property type="entry name" value="Arm"/>
    <property type="match status" value="5"/>
</dbReference>
<dbReference type="Pfam" id="PF16186">
    <property type="entry name" value="Arm_3"/>
    <property type="match status" value="1"/>
</dbReference>
<dbReference type="PIRSF" id="PIRSF005673">
    <property type="entry name" value="Importin_alpha"/>
    <property type="match status" value="1"/>
</dbReference>
<dbReference type="SMART" id="SM00185">
    <property type="entry name" value="ARM"/>
    <property type="match status" value="8"/>
</dbReference>
<dbReference type="SUPFAM" id="SSF48371">
    <property type="entry name" value="ARM repeat"/>
    <property type="match status" value="1"/>
</dbReference>
<dbReference type="PROSITE" id="PS50176">
    <property type="entry name" value="ARM_REPEAT"/>
    <property type="match status" value="3"/>
</dbReference>
<dbReference type="PROSITE" id="PS50077">
    <property type="entry name" value="HEAT_REPEAT"/>
    <property type="match status" value="1"/>
</dbReference>
<keyword id="KW-0539">Nucleus</keyword>
<keyword id="KW-0653">Protein transport</keyword>
<keyword id="KW-1185">Reference proteome</keyword>
<keyword id="KW-0677">Repeat</keyword>
<keyword id="KW-0813">Transport</keyword>
<gene>
    <name evidence="3" type="primary">IMPA8</name>
    <name evidence="5" type="ordered locus">At5g52000</name>
    <name evidence="6" type="ORF">MSG15.8</name>
</gene>
<reference key="1">
    <citation type="journal article" date="1998" name="DNA Res.">
        <title>Structural analysis of Arabidopsis thaliana chromosome 5. VII. Sequence features of the regions of 1,013,767 bp covered by sixteen physically assigned P1 and TAC clones.</title>
        <authorList>
            <person name="Nakamura Y."/>
            <person name="Sato S."/>
            <person name="Asamizu E."/>
            <person name="Kaneko T."/>
            <person name="Kotani H."/>
            <person name="Miyajima N."/>
            <person name="Tabata S."/>
        </authorList>
    </citation>
    <scope>NUCLEOTIDE SEQUENCE [LARGE SCALE GENOMIC DNA]</scope>
    <source>
        <strain>cv. Columbia</strain>
    </source>
</reference>
<reference key="2">
    <citation type="journal article" date="2017" name="Plant J.">
        <title>Araport11: a complete reannotation of the Arabidopsis thaliana reference genome.</title>
        <authorList>
            <person name="Cheng C.Y."/>
            <person name="Krishnakumar V."/>
            <person name="Chan A.P."/>
            <person name="Thibaud-Nissen F."/>
            <person name="Schobel S."/>
            <person name="Town C.D."/>
        </authorList>
    </citation>
    <scope>GENOME REANNOTATION</scope>
    <source>
        <strain>cv. Columbia</strain>
    </source>
</reference>
<reference key="3">
    <citation type="journal article" date="2008" name="Plant Cell">
        <title>IMPa-4, an Arabidopsis importin alpha isoform, is preferentially involved in agrobacterium-mediated plant transformation.</title>
        <authorList>
            <person name="Bhattacharjee S."/>
            <person name="Lee L.Y."/>
            <person name="Oltmanns H."/>
            <person name="Cao H."/>
            <person name="Gupta V."/>
            <person name="Cuperus J."/>
            <person name="Gelvin S.B."/>
        </authorList>
    </citation>
    <scope>GENE FAMILY</scope>
</reference>
<sequence>MAWKTEVNEVSDDIIDGLWSDDPPLQLESVTKIRRITSQRDISCVIRSGVVPRLVQLLKNQVFPKLQYEVAWALTNIAVDNPGVVVNNNAVPVLIQLIASPKDYVREQAIWTLSNVAGHSIHYRDFVLNSGVLMPLLRLLYKDTTLRIATWALRNLCRGKPHPAFDQVKPALPALEILLHSHDEDVLKNACMALCHLSEGSEDGIQSVIEAGFVPKLVQILQLPSPVVLVPALLTIGAMTAGNHQQTQCVINSGALPIISNMLTRNHENKIKKCACWVISNITAGTKEQIQSVIDANLIPILVNLAQDTDFYMKKEAVWAISNMALNGSHDQIKYMAEQSCIKQLCDILVYSDERTTILKCLDGLENMLKAGEAEKNSEDVNPYCLLIEDAEGLEKISKLQMNKNDDIYEKAYKILVTNWFEEDDENNNNNVRCDDVDFQV</sequence>
<name>IMPA8_ARATH</name>
<proteinExistence type="inferred from homology"/>
<protein>
    <recommendedName>
        <fullName evidence="4">Importin subunit alpha-8</fullName>
        <shortName evidence="3">IMPa-8</shortName>
    </recommendedName>
</protein>
<accession>Q9FJ92</accession>
<organism>
    <name type="scientific">Arabidopsis thaliana</name>
    <name type="common">Mouse-ear cress</name>
    <dbReference type="NCBI Taxonomy" id="3702"/>
    <lineage>
        <taxon>Eukaryota</taxon>
        <taxon>Viridiplantae</taxon>
        <taxon>Streptophyta</taxon>
        <taxon>Embryophyta</taxon>
        <taxon>Tracheophyta</taxon>
        <taxon>Spermatophyta</taxon>
        <taxon>Magnoliopsida</taxon>
        <taxon>eudicotyledons</taxon>
        <taxon>Gunneridae</taxon>
        <taxon>Pentapetalae</taxon>
        <taxon>rosids</taxon>
        <taxon>malvids</taxon>
        <taxon>Brassicales</taxon>
        <taxon>Brassicaceae</taxon>
        <taxon>Camelineae</taxon>
        <taxon>Arabidopsis</taxon>
    </lineage>
</organism>